<protein>
    <recommendedName>
        <fullName evidence="1">Large ribosomal subunit protein uL18</fullName>
    </recommendedName>
    <alternativeName>
        <fullName evidence="2">50S ribosomal protein L18</fullName>
    </alternativeName>
</protein>
<sequence length="120" mass="13472">MGKRTPRELRLRRHNRIRKRVFGTPERPRLNVFRSHVHIYAQVIDDTVGHTLVAASTNEKGWSGSPELTKTQEAALVGKLIAERALQAGITKVVFDRGGYKYHGRVKALAEAAREAGLNF</sequence>
<name>RL18_CHLSY</name>
<keyword id="KW-0687">Ribonucleoprotein</keyword>
<keyword id="KW-0689">Ribosomal protein</keyword>
<keyword id="KW-0694">RNA-binding</keyword>
<keyword id="KW-0699">rRNA-binding</keyword>
<proteinExistence type="inferred from homology"/>
<accession>B9LJE8</accession>
<organism>
    <name type="scientific">Chloroflexus aurantiacus (strain ATCC 29364 / DSM 637 / Y-400-fl)</name>
    <dbReference type="NCBI Taxonomy" id="480224"/>
    <lineage>
        <taxon>Bacteria</taxon>
        <taxon>Bacillati</taxon>
        <taxon>Chloroflexota</taxon>
        <taxon>Chloroflexia</taxon>
        <taxon>Chloroflexales</taxon>
        <taxon>Chloroflexineae</taxon>
        <taxon>Chloroflexaceae</taxon>
        <taxon>Chloroflexus</taxon>
    </lineage>
</organism>
<dbReference type="EMBL" id="CP001364">
    <property type="protein sequence ID" value="ACM53964.1"/>
    <property type="molecule type" value="Genomic_DNA"/>
</dbReference>
<dbReference type="SMR" id="B9LJE8"/>
<dbReference type="KEGG" id="chl:Chy400_2572"/>
<dbReference type="HOGENOM" id="CLU_098841_0_1_0"/>
<dbReference type="OrthoDB" id="9810939at2"/>
<dbReference type="GO" id="GO:0022625">
    <property type="term" value="C:cytosolic large ribosomal subunit"/>
    <property type="evidence" value="ECO:0007669"/>
    <property type="project" value="TreeGrafter"/>
</dbReference>
<dbReference type="GO" id="GO:0008097">
    <property type="term" value="F:5S rRNA binding"/>
    <property type="evidence" value="ECO:0007669"/>
    <property type="project" value="TreeGrafter"/>
</dbReference>
<dbReference type="GO" id="GO:0003735">
    <property type="term" value="F:structural constituent of ribosome"/>
    <property type="evidence" value="ECO:0007669"/>
    <property type="project" value="InterPro"/>
</dbReference>
<dbReference type="GO" id="GO:0006412">
    <property type="term" value="P:translation"/>
    <property type="evidence" value="ECO:0007669"/>
    <property type="project" value="UniProtKB-UniRule"/>
</dbReference>
<dbReference type="CDD" id="cd00432">
    <property type="entry name" value="Ribosomal_L18_L5e"/>
    <property type="match status" value="1"/>
</dbReference>
<dbReference type="FunFam" id="3.30.420.100:FF:000001">
    <property type="entry name" value="50S ribosomal protein L18"/>
    <property type="match status" value="1"/>
</dbReference>
<dbReference type="Gene3D" id="3.30.420.100">
    <property type="match status" value="1"/>
</dbReference>
<dbReference type="HAMAP" id="MF_01337_B">
    <property type="entry name" value="Ribosomal_uL18_B"/>
    <property type="match status" value="1"/>
</dbReference>
<dbReference type="InterPro" id="IPR004389">
    <property type="entry name" value="Ribosomal_uL18_bac-type"/>
</dbReference>
<dbReference type="InterPro" id="IPR005484">
    <property type="entry name" value="Ribosomal_uL18_bac/euk"/>
</dbReference>
<dbReference type="NCBIfam" id="TIGR00060">
    <property type="entry name" value="L18_bact"/>
    <property type="match status" value="1"/>
</dbReference>
<dbReference type="PANTHER" id="PTHR12899">
    <property type="entry name" value="39S RIBOSOMAL PROTEIN L18, MITOCHONDRIAL"/>
    <property type="match status" value="1"/>
</dbReference>
<dbReference type="PANTHER" id="PTHR12899:SF3">
    <property type="entry name" value="LARGE RIBOSOMAL SUBUNIT PROTEIN UL18M"/>
    <property type="match status" value="1"/>
</dbReference>
<dbReference type="Pfam" id="PF00861">
    <property type="entry name" value="Ribosomal_L18p"/>
    <property type="match status" value="1"/>
</dbReference>
<dbReference type="SUPFAM" id="SSF53137">
    <property type="entry name" value="Translational machinery components"/>
    <property type="match status" value="1"/>
</dbReference>
<comment type="function">
    <text evidence="1">This is one of the proteins that bind and probably mediate the attachment of the 5S RNA into the large ribosomal subunit, where it forms part of the central protuberance.</text>
</comment>
<comment type="subunit">
    <text evidence="1">Part of the 50S ribosomal subunit; part of the 5S rRNA/L5/L18/L25 subcomplex. Contacts the 5S and 23S rRNAs.</text>
</comment>
<comment type="similarity">
    <text evidence="1">Belongs to the universal ribosomal protein uL18 family.</text>
</comment>
<feature type="chain" id="PRO_1000166218" description="Large ribosomal subunit protein uL18">
    <location>
        <begin position="1"/>
        <end position="120"/>
    </location>
</feature>
<reference key="1">
    <citation type="submission" date="2009-01" db="EMBL/GenBank/DDBJ databases">
        <title>Complete sequence of Chloroflexus sp. Y-400-fl.</title>
        <authorList>
            <consortium name="US DOE Joint Genome Institute"/>
            <person name="Lucas S."/>
            <person name="Copeland A."/>
            <person name="Lapidus A."/>
            <person name="Glavina del Rio T."/>
            <person name="Dalin E."/>
            <person name="Tice H."/>
            <person name="Bruce D."/>
            <person name="Goodwin L."/>
            <person name="Pitluck S."/>
            <person name="Sims D."/>
            <person name="Kiss H."/>
            <person name="Brettin T."/>
            <person name="Detter J.C."/>
            <person name="Han C."/>
            <person name="Larimer F."/>
            <person name="Land M."/>
            <person name="Hauser L."/>
            <person name="Kyrpides N."/>
            <person name="Ovchinnikova G."/>
            <person name="Bryant D.A."/>
            <person name="Richardson P."/>
        </authorList>
    </citation>
    <scope>NUCLEOTIDE SEQUENCE [LARGE SCALE GENOMIC DNA]</scope>
    <source>
        <strain>ATCC 29364 / DSM 637 / Y-400-fl</strain>
    </source>
</reference>
<evidence type="ECO:0000255" key="1">
    <source>
        <dbReference type="HAMAP-Rule" id="MF_01337"/>
    </source>
</evidence>
<evidence type="ECO:0000305" key="2"/>
<gene>
    <name evidence="1" type="primary">rplR</name>
    <name type="ordered locus">Chy400_2572</name>
</gene>